<reference key="1">
    <citation type="journal article" date="2008" name="Genomics">
        <title>Evolution in the laboratory: the genome of Halobacterium salinarum strain R1 compared to that of strain NRC-1.</title>
        <authorList>
            <person name="Pfeiffer F."/>
            <person name="Schuster S.C."/>
            <person name="Broicher A."/>
            <person name="Falb M."/>
            <person name="Palm P."/>
            <person name="Rodewald K."/>
            <person name="Ruepp A."/>
            <person name="Soppa J."/>
            <person name="Tittor J."/>
            <person name="Oesterhelt D."/>
        </authorList>
    </citation>
    <scope>NUCLEOTIDE SEQUENCE [LARGE SCALE GENOMIC DNA]</scope>
    <source>
        <strain>ATCC 29341 / DSM 671 / R1</strain>
    </source>
</reference>
<evidence type="ECO:0000255" key="1">
    <source>
        <dbReference type="HAMAP-Rule" id="MF_01023"/>
    </source>
</evidence>
<name>HIS8_HALS3</name>
<dbReference type="EC" id="2.6.1.9" evidence="1"/>
<dbReference type="EMBL" id="AM774415">
    <property type="protein sequence ID" value="CAP13719.1"/>
    <property type="molecule type" value="Genomic_DNA"/>
</dbReference>
<dbReference type="RefSeq" id="WP_012289267.1">
    <property type="nucleotide sequence ID" value="NC_010364.1"/>
</dbReference>
<dbReference type="SMR" id="B0R4Q4"/>
<dbReference type="EnsemblBacteria" id="CAP13719">
    <property type="protein sequence ID" value="CAP13719"/>
    <property type="gene ID" value="OE_2507R"/>
</dbReference>
<dbReference type="GeneID" id="68693833"/>
<dbReference type="KEGG" id="hsl:OE_2507R"/>
<dbReference type="HOGENOM" id="CLU_017584_3_3_2"/>
<dbReference type="PhylomeDB" id="B0R4Q4"/>
<dbReference type="UniPathway" id="UPA00031">
    <property type="reaction ID" value="UER00012"/>
</dbReference>
<dbReference type="Proteomes" id="UP000001321">
    <property type="component" value="Chromosome"/>
</dbReference>
<dbReference type="GO" id="GO:0004400">
    <property type="term" value="F:histidinol-phosphate transaminase activity"/>
    <property type="evidence" value="ECO:0007669"/>
    <property type="project" value="UniProtKB-UniRule"/>
</dbReference>
<dbReference type="GO" id="GO:0030170">
    <property type="term" value="F:pyridoxal phosphate binding"/>
    <property type="evidence" value="ECO:0007669"/>
    <property type="project" value="InterPro"/>
</dbReference>
<dbReference type="GO" id="GO:0000105">
    <property type="term" value="P:L-histidine biosynthetic process"/>
    <property type="evidence" value="ECO:0007669"/>
    <property type="project" value="UniProtKB-UniRule"/>
</dbReference>
<dbReference type="CDD" id="cd00609">
    <property type="entry name" value="AAT_like"/>
    <property type="match status" value="1"/>
</dbReference>
<dbReference type="Gene3D" id="3.90.1150.10">
    <property type="entry name" value="Aspartate Aminotransferase, domain 1"/>
    <property type="match status" value="1"/>
</dbReference>
<dbReference type="Gene3D" id="3.40.640.10">
    <property type="entry name" value="Type I PLP-dependent aspartate aminotransferase-like (Major domain)"/>
    <property type="match status" value="1"/>
</dbReference>
<dbReference type="HAMAP" id="MF_01023">
    <property type="entry name" value="HisC_aminotrans_2"/>
    <property type="match status" value="1"/>
</dbReference>
<dbReference type="InterPro" id="IPR001917">
    <property type="entry name" value="Aminotrans_II_pyridoxalP_BS"/>
</dbReference>
<dbReference type="InterPro" id="IPR004839">
    <property type="entry name" value="Aminotransferase_I/II_large"/>
</dbReference>
<dbReference type="InterPro" id="IPR005861">
    <property type="entry name" value="HisP_aminotrans"/>
</dbReference>
<dbReference type="InterPro" id="IPR015424">
    <property type="entry name" value="PyrdxlP-dep_Trfase"/>
</dbReference>
<dbReference type="InterPro" id="IPR015421">
    <property type="entry name" value="PyrdxlP-dep_Trfase_major"/>
</dbReference>
<dbReference type="InterPro" id="IPR015422">
    <property type="entry name" value="PyrdxlP-dep_Trfase_small"/>
</dbReference>
<dbReference type="NCBIfam" id="TIGR01141">
    <property type="entry name" value="hisC"/>
    <property type="match status" value="1"/>
</dbReference>
<dbReference type="PANTHER" id="PTHR42885:SF2">
    <property type="entry name" value="HISTIDINOL-PHOSPHATE AMINOTRANSFERASE"/>
    <property type="match status" value="1"/>
</dbReference>
<dbReference type="PANTHER" id="PTHR42885">
    <property type="entry name" value="HISTIDINOL-PHOSPHATE AMINOTRANSFERASE-RELATED"/>
    <property type="match status" value="1"/>
</dbReference>
<dbReference type="Pfam" id="PF00155">
    <property type="entry name" value="Aminotran_1_2"/>
    <property type="match status" value="1"/>
</dbReference>
<dbReference type="SUPFAM" id="SSF53383">
    <property type="entry name" value="PLP-dependent transferases"/>
    <property type="match status" value="1"/>
</dbReference>
<dbReference type="PROSITE" id="PS00599">
    <property type="entry name" value="AA_TRANSFER_CLASS_2"/>
    <property type="match status" value="1"/>
</dbReference>
<feature type="chain" id="PRO_1000135402" description="Histidinol-phosphate aminotransferase">
    <location>
        <begin position="1"/>
        <end position="366"/>
    </location>
</feature>
<feature type="modified residue" description="N6-(pyridoxal phosphate)lysine" evidence="1">
    <location>
        <position position="231"/>
    </location>
</feature>
<sequence>MELRDLSDHVEYRAGRGIEEVARELGRDPSEFVKLSSNENPHGPSPKATIAIREAATGVHRYPKAVHADLTGALADRWDVGDDQVWVANGGDGALDYLARATLDPGDSVLVPSPGFTYYGMSARFHHGNVAEYDVAEGADGFEMTADAVVDAYDGERVVYLTTPHNPTGARFTLDEIVAVADRTDEDTLVLVDEAYGEFTETPSAVTLFDGQPAGGHAPRDDIAVLRTFSKAYGLAGIRLGYAVVPDSWADAYARVQTPFAASVIACQAGVAALDDDDHVEATTDSVAWGRDYIHDELAARTYESHGNFVLANVGDAGRVAEAAKREGVLVRDCTSFGLPEHVRITIGTRSETERAVAVLNEVCDT</sequence>
<protein>
    <recommendedName>
        <fullName evidence="1">Histidinol-phosphate aminotransferase</fullName>
        <ecNumber evidence="1">2.6.1.9</ecNumber>
    </recommendedName>
    <alternativeName>
        <fullName evidence="1">Imidazole acetol-phosphate transaminase</fullName>
    </alternativeName>
</protein>
<comment type="catalytic activity">
    <reaction evidence="1">
        <text>L-histidinol phosphate + 2-oxoglutarate = 3-(imidazol-4-yl)-2-oxopropyl phosphate + L-glutamate</text>
        <dbReference type="Rhea" id="RHEA:23744"/>
        <dbReference type="ChEBI" id="CHEBI:16810"/>
        <dbReference type="ChEBI" id="CHEBI:29985"/>
        <dbReference type="ChEBI" id="CHEBI:57766"/>
        <dbReference type="ChEBI" id="CHEBI:57980"/>
        <dbReference type="EC" id="2.6.1.9"/>
    </reaction>
</comment>
<comment type="cofactor">
    <cofactor evidence="1">
        <name>pyridoxal 5'-phosphate</name>
        <dbReference type="ChEBI" id="CHEBI:597326"/>
    </cofactor>
</comment>
<comment type="pathway">
    <text evidence="1">Amino-acid biosynthesis; L-histidine biosynthesis; L-histidine from 5-phospho-alpha-D-ribose 1-diphosphate: step 7/9.</text>
</comment>
<comment type="similarity">
    <text evidence="1">Belongs to the class-II pyridoxal-phosphate-dependent aminotransferase family. Histidinol-phosphate aminotransferase subfamily.</text>
</comment>
<keyword id="KW-0028">Amino-acid biosynthesis</keyword>
<keyword id="KW-0032">Aminotransferase</keyword>
<keyword id="KW-0368">Histidine biosynthesis</keyword>
<keyword id="KW-0663">Pyridoxal phosphate</keyword>
<keyword id="KW-0808">Transferase</keyword>
<gene>
    <name evidence="1" type="primary">hisC</name>
    <name type="ordered locus">OE_2507R</name>
</gene>
<organism>
    <name type="scientific">Halobacterium salinarum (strain ATCC 29341 / DSM 671 / R1)</name>
    <dbReference type="NCBI Taxonomy" id="478009"/>
    <lineage>
        <taxon>Archaea</taxon>
        <taxon>Methanobacteriati</taxon>
        <taxon>Methanobacteriota</taxon>
        <taxon>Stenosarchaea group</taxon>
        <taxon>Halobacteria</taxon>
        <taxon>Halobacteriales</taxon>
        <taxon>Halobacteriaceae</taxon>
        <taxon>Halobacterium</taxon>
        <taxon>Halobacterium salinarum NRC-34001</taxon>
    </lineage>
</organism>
<proteinExistence type="inferred from homology"/>
<accession>B0R4Q4</accession>